<gene>
    <name evidence="1" type="primary">arnE</name>
    <name type="ordered locus">YPK_1836</name>
</gene>
<sequence>MNSYLLLPMVSLLTCIGQLCQKQAAQCWEQPQARRLNLTLRWLAIAVVSLGLGMLLWLRLLQQLPLSVAYPMLSFNFVLVTLAAQLFYGEKATLRHWLGVAAIMFGILLMSWHL</sequence>
<keyword id="KW-0997">Cell inner membrane</keyword>
<keyword id="KW-1003">Cell membrane</keyword>
<keyword id="KW-0441">Lipid A biosynthesis</keyword>
<keyword id="KW-0444">Lipid biosynthesis</keyword>
<keyword id="KW-0443">Lipid metabolism</keyword>
<keyword id="KW-0448">Lipopolysaccharide biosynthesis</keyword>
<keyword id="KW-0472">Membrane</keyword>
<keyword id="KW-0812">Transmembrane</keyword>
<keyword id="KW-1133">Transmembrane helix</keyword>
<keyword id="KW-0813">Transport</keyword>
<organism>
    <name type="scientific">Yersinia pseudotuberculosis serotype O:3 (strain YPIII)</name>
    <dbReference type="NCBI Taxonomy" id="502800"/>
    <lineage>
        <taxon>Bacteria</taxon>
        <taxon>Pseudomonadati</taxon>
        <taxon>Pseudomonadota</taxon>
        <taxon>Gammaproteobacteria</taxon>
        <taxon>Enterobacterales</taxon>
        <taxon>Yersiniaceae</taxon>
        <taxon>Yersinia</taxon>
    </lineage>
</organism>
<protein>
    <recommendedName>
        <fullName evidence="1">Probable 4-amino-4-deoxy-L-arabinose-phosphoundecaprenol flippase subunit ArnE</fullName>
        <shortName evidence="1">L-Ara4N-phosphoundecaprenol flippase subunit ArnE</shortName>
    </recommendedName>
    <alternativeName>
        <fullName evidence="1">Undecaprenyl phosphate-aminoarabinose flippase subunit ArnE</fullName>
    </alternativeName>
</protein>
<evidence type="ECO:0000255" key="1">
    <source>
        <dbReference type="HAMAP-Rule" id="MF_01869"/>
    </source>
</evidence>
<name>ARNE_YERPY</name>
<dbReference type="EMBL" id="CP000950">
    <property type="protein sequence ID" value="ACA68127.1"/>
    <property type="molecule type" value="Genomic_DNA"/>
</dbReference>
<dbReference type="RefSeq" id="WP_012304020.1">
    <property type="nucleotide sequence ID" value="NZ_CP009792.1"/>
</dbReference>
<dbReference type="KEGG" id="ypy:YPK_1836"/>
<dbReference type="PATRIC" id="fig|502800.11.peg.2505"/>
<dbReference type="UniPathway" id="UPA00030"/>
<dbReference type="GO" id="GO:0005886">
    <property type="term" value="C:plasma membrane"/>
    <property type="evidence" value="ECO:0007669"/>
    <property type="project" value="UniProtKB-SubCell"/>
</dbReference>
<dbReference type="GO" id="GO:1901505">
    <property type="term" value="F:carbohydrate derivative transmembrane transporter activity"/>
    <property type="evidence" value="ECO:0007669"/>
    <property type="project" value="InterPro"/>
</dbReference>
<dbReference type="GO" id="GO:0009245">
    <property type="term" value="P:lipid A biosynthetic process"/>
    <property type="evidence" value="ECO:0007669"/>
    <property type="project" value="UniProtKB-UniRule"/>
</dbReference>
<dbReference type="GO" id="GO:0009103">
    <property type="term" value="P:lipopolysaccharide biosynthetic process"/>
    <property type="evidence" value="ECO:0007669"/>
    <property type="project" value="UniProtKB-UniRule"/>
</dbReference>
<dbReference type="FunFam" id="1.10.3730.20:FF:000002">
    <property type="entry name" value="Probable 4-amino-4-deoxy-L-arabinose-phosphoundecaprenol flippase subunit ArnE"/>
    <property type="match status" value="1"/>
</dbReference>
<dbReference type="Gene3D" id="1.10.3730.20">
    <property type="match status" value="1"/>
</dbReference>
<dbReference type="HAMAP" id="MF_01869">
    <property type="entry name" value="Flippase_ArnE"/>
    <property type="match status" value="1"/>
</dbReference>
<dbReference type="InterPro" id="IPR000620">
    <property type="entry name" value="EamA_dom"/>
</dbReference>
<dbReference type="InterPro" id="IPR022883">
    <property type="entry name" value="Flippase_ArnE"/>
</dbReference>
<dbReference type="InterPro" id="IPR000390">
    <property type="entry name" value="Small_drug/metabolite_transptr"/>
</dbReference>
<dbReference type="NCBIfam" id="NF011625">
    <property type="entry name" value="PRK15051.1"/>
    <property type="match status" value="1"/>
</dbReference>
<dbReference type="PANTHER" id="PTHR30561:SF23">
    <property type="entry name" value="4-AMINO-4-DEOXY-L-ARABINOSE-PHOSPHOUNDECAPRENOL FLIPPASE SUBUNIT ARNE-RELATED"/>
    <property type="match status" value="1"/>
</dbReference>
<dbReference type="PANTHER" id="PTHR30561">
    <property type="entry name" value="SMR FAMILY PROTON-DEPENDENT DRUG EFFLUX TRANSPORTER SUGE"/>
    <property type="match status" value="1"/>
</dbReference>
<dbReference type="Pfam" id="PF00892">
    <property type="entry name" value="EamA"/>
    <property type="match status" value="1"/>
</dbReference>
<dbReference type="SUPFAM" id="SSF103481">
    <property type="entry name" value="Multidrug resistance efflux transporter EmrE"/>
    <property type="match status" value="1"/>
</dbReference>
<accession>B1JJ33</accession>
<proteinExistence type="inferred from homology"/>
<reference key="1">
    <citation type="submission" date="2008-02" db="EMBL/GenBank/DDBJ databases">
        <title>Complete sequence of Yersinia pseudotuberculosis YPIII.</title>
        <authorList>
            <consortium name="US DOE Joint Genome Institute"/>
            <person name="Copeland A."/>
            <person name="Lucas S."/>
            <person name="Lapidus A."/>
            <person name="Glavina del Rio T."/>
            <person name="Dalin E."/>
            <person name="Tice H."/>
            <person name="Bruce D."/>
            <person name="Goodwin L."/>
            <person name="Pitluck S."/>
            <person name="Munk A.C."/>
            <person name="Brettin T."/>
            <person name="Detter J.C."/>
            <person name="Han C."/>
            <person name="Tapia R."/>
            <person name="Schmutz J."/>
            <person name="Larimer F."/>
            <person name="Land M."/>
            <person name="Hauser L."/>
            <person name="Challacombe J.F."/>
            <person name="Green L."/>
            <person name="Lindler L.E."/>
            <person name="Nikolich M.P."/>
            <person name="Richardson P."/>
        </authorList>
    </citation>
    <scope>NUCLEOTIDE SEQUENCE [LARGE SCALE GENOMIC DNA]</scope>
    <source>
        <strain>YPIII</strain>
    </source>
</reference>
<feature type="chain" id="PRO_0000383020" description="Probable 4-amino-4-deoxy-L-arabinose-phosphoundecaprenol flippase subunit ArnE">
    <location>
        <begin position="1"/>
        <end position="114"/>
    </location>
</feature>
<feature type="transmembrane region" description="Helical" evidence="1">
    <location>
        <begin position="38"/>
        <end position="58"/>
    </location>
</feature>
<feature type="transmembrane region" description="Helical" evidence="1">
    <location>
        <begin position="64"/>
        <end position="84"/>
    </location>
</feature>
<feature type="transmembrane region" description="Helical" evidence="1">
    <location>
        <begin position="94"/>
        <end position="114"/>
    </location>
</feature>
<feature type="domain" description="EamA" evidence="1">
    <location>
        <begin position="43"/>
        <end position="112"/>
    </location>
</feature>
<comment type="function">
    <text evidence="1">Translocates 4-amino-4-deoxy-L-arabinose-phosphoundecaprenol (alpha-L-Ara4N-phosphoundecaprenol) from the cytoplasmic to the periplasmic side of the inner membrane.</text>
</comment>
<comment type="pathway">
    <text evidence="1">Bacterial outer membrane biogenesis; lipopolysaccharide biosynthesis.</text>
</comment>
<comment type="subunit">
    <text evidence="1">Heterodimer of ArnE and ArnF.</text>
</comment>
<comment type="subcellular location">
    <subcellularLocation>
        <location evidence="1">Cell inner membrane</location>
        <topology evidence="1">Multi-pass membrane protein</topology>
    </subcellularLocation>
</comment>
<comment type="similarity">
    <text evidence="1">Belongs to the ArnE family.</text>
</comment>